<proteinExistence type="inferred from homology"/>
<name>RL21_HERAR</name>
<feature type="chain" id="PRO_1000143809" description="Large ribosomal subunit protein bL21">
    <location>
        <begin position="1"/>
        <end position="103"/>
    </location>
</feature>
<gene>
    <name evidence="1" type="primary">rplU</name>
    <name type="ordered locus">HEAR2787</name>
</gene>
<evidence type="ECO:0000255" key="1">
    <source>
        <dbReference type="HAMAP-Rule" id="MF_01363"/>
    </source>
</evidence>
<evidence type="ECO:0000305" key="2"/>
<keyword id="KW-1185">Reference proteome</keyword>
<keyword id="KW-0687">Ribonucleoprotein</keyword>
<keyword id="KW-0689">Ribosomal protein</keyword>
<keyword id="KW-0694">RNA-binding</keyword>
<keyword id="KW-0699">rRNA-binding</keyword>
<dbReference type="EMBL" id="CU207211">
    <property type="protein sequence ID" value="CAL62903.2"/>
    <property type="molecule type" value="Genomic_DNA"/>
</dbReference>
<dbReference type="SMR" id="A4G8R6"/>
<dbReference type="STRING" id="204773.HEAR2787"/>
<dbReference type="KEGG" id="har:HEAR2787"/>
<dbReference type="eggNOG" id="COG0261">
    <property type="taxonomic scope" value="Bacteria"/>
</dbReference>
<dbReference type="HOGENOM" id="CLU_061463_3_2_4"/>
<dbReference type="OrthoDB" id="9813334at2"/>
<dbReference type="Proteomes" id="UP000006697">
    <property type="component" value="Chromosome"/>
</dbReference>
<dbReference type="GO" id="GO:0005737">
    <property type="term" value="C:cytoplasm"/>
    <property type="evidence" value="ECO:0007669"/>
    <property type="project" value="UniProtKB-ARBA"/>
</dbReference>
<dbReference type="GO" id="GO:1990904">
    <property type="term" value="C:ribonucleoprotein complex"/>
    <property type="evidence" value="ECO:0007669"/>
    <property type="project" value="UniProtKB-KW"/>
</dbReference>
<dbReference type="GO" id="GO:0005840">
    <property type="term" value="C:ribosome"/>
    <property type="evidence" value="ECO:0007669"/>
    <property type="project" value="UniProtKB-KW"/>
</dbReference>
<dbReference type="GO" id="GO:0019843">
    <property type="term" value="F:rRNA binding"/>
    <property type="evidence" value="ECO:0007669"/>
    <property type="project" value="UniProtKB-UniRule"/>
</dbReference>
<dbReference type="GO" id="GO:0003735">
    <property type="term" value="F:structural constituent of ribosome"/>
    <property type="evidence" value="ECO:0007669"/>
    <property type="project" value="InterPro"/>
</dbReference>
<dbReference type="GO" id="GO:0006412">
    <property type="term" value="P:translation"/>
    <property type="evidence" value="ECO:0007669"/>
    <property type="project" value="UniProtKB-UniRule"/>
</dbReference>
<dbReference type="HAMAP" id="MF_01363">
    <property type="entry name" value="Ribosomal_bL21"/>
    <property type="match status" value="1"/>
</dbReference>
<dbReference type="InterPro" id="IPR028909">
    <property type="entry name" value="bL21-like"/>
</dbReference>
<dbReference type="InterPro" id="IPR036164">
    <property type="entry name" value="bL21-like_sf"/>
</dbReference>
<dbReference type="InterPro" id="IPR001787">
    <property type="entry name" value="Ribosomal_bL21"/>
</dbReference>
<dbReference type="InterPro" id="IPR018258">
    <property type="entry name" value="Ribosomal_bL21_CS"/>
</dbReference>
<dbReference type="NCBIfam" id="TIGR00061">
    <property type="entry name" value="L21"/>
    <property type="match status" value="1"/>
</dbReference>
<dbReference type="PANTHER" id="PTHR21349">
    <property type="entry name" value="50S RIBOSOMAL PROTEIN L21"/>
    <property type="match status" value="1"/>
</dbReference>
<dbReference type="PANTHER" id="PTHR21349:SF0">
    <property type="entry name" value="LARGE RIBOSOMAL SUBUNIT PROTEIN BL21M"/>
    <property type="match status" value="1"/>
</dbReference>
<dbReference type="Pfam" id="PF00829">
    <property type="entry name" value="Ribosomal_L21p"/>
    <property type="match status" value="1"/>
</dbReference>
<dbReference type="SUPFAM" id="SSF141091">
    <property type="entry name" value="L21p-like"/>
    <property type="match status" value="1"/>
</dbReference>
<dbReference type="PROSITE" id="PS01169">
    <property type="entry name" value="RIBOSOMAL_L21"/>
    <property type="match status" value="1"/>
</dbReference>
<sequence length="103" mass="11429">MYAVIKTGGKQYKVVAGEKFKVEQIPADIGSEITLDQVLALGAGETIKFGAPLVEGATVLATVVSHGRHDKVKIFKMRRRKHYQKHQGHRQNYTELQIVSING</sequence>
<organism>
    <name type="scientific">Herminiimonas arsenicoxydans</name>
    <dbReference type="NCBI Taxonomy" id="204773"/>
    <lineage>
        <taxon>Bacteria</taxon>
        <taxon>Pseudomonadati</taxon>
        <taxon>Pseudomonadota</taxon>
        <taxon>Betaproteobacteria</taxon>
        <taxon>Burkholderiales</taxon>
        <taxon>Oxalobacteraceae</taxon>
        <taxon>Herminiimonas</taxon>
    </lineage>
</organism>
<comment type="function">
    <text evidence="1">This protein binds to 23S rRNA in the presence of protein L20.</text>
</comment>
<comment type="subunit">
    <text evidence="1">Part of the 50S ribosomal subunit. Contacts protein L20.</text>
</comment>
<comment type="similarity">
    <text evidence="1">Belongs to the bacterial ribosomal protein bL21 family.</text>
</comment>
<accession>A4G8R6</accession>
<protein>
    <recommendedName>
        <fullName evidence="1">Large ribosomal subunit protein bL21</fullName>
    </recommendedName>
    <alternativeName>
        <fullName evidence="2">50S ribosomal protein L21</fullName>
    </alternativeName>
</protein>
<reference key="1">
    <citation type="journal article" date="2007" name="PLoS Genet.">
        <title>A tale of two oxidation states: bacterial colonization of arsenic-rich environments.</title>
        <authorList>
            <person name="Muller D."/>
            <person name="Medigue C."/>
            <person name="Koechler S."/>
            <person name="Barbe V."/>
            <person name="Barakat M."/>
            <person name="Talla E."/>
            <person name="Bonnefoy V."/>
            <person name="Krin E."/>
            <person name="Arsene-Ploetze F."/>
            <person name="Carapito C."/>
            <person name="Chandler M."/>
            <person name="Cournoyer B."/>
            <person name="Cruveiller S."/>
            <person name="Dossat C."/>
            <person name="Duval S."/>
            <person name="Heymann M."/>
            <person name="Leize E."/>
            <person name="Lieutaud A."/>
            <person name="Lievremont D."/>
            <person name="Makita Y."/>
            <person name="Mangenot S."/>
            <person name="Nitschke W."/>
            <person name="Ortet P."/>
            <person name="Perdrial N."/>
            <person name="Schoepp B."/>
            <person name="Siguier P."/>
            <person name="Simeonova D.D."/>
            <person name="Rouy Z."/>
            <person name="Segurens B."/>
            <person name="Turlin E."/>
            <person name="Vallenet D."/>
            <person name="van Dorsselaer A."/>
            <person name="Weiss S."/>
            <person name="Weissenbach J."/>
            <person name="Lett M.-C."/>
            <person name="Danchin A."/>
            <person name="Bertin P.N."/>
        </authorList>
    </citation>
    <scope>NUCLEOTIDE SEQUENCE [LARGE SCALE GENOMIC DNA]</scope>
    <source>
        <strain>ULPAs1</strain>
    </source>
</reference>